<feature type="chain" id="PRO_0000054262" description="High affinity cationic amino acid transporter 1">
    <location>
        <begin position="1"/>
        <end position="622"/>
    </location>
</feature>
<feature type="topological domain" description="Cytoplasmic" evidence="2">
    <location>
        <begin position="1"/>
        <end position="35"/>
    </location>
</feature>
<feature type="transmembrane region" description="Helical" evidence="2">
    <location>
        <begin position="36"/>
        <end position="57"/>
    </location>
</feature>
<feature type="topological domain" description="Extracellular" evidence="2">
    <location>
        <begin position="58"/>
        <end position="61"/>
    </location>
</feature>
<feature type="transmembrane region" description="Helical" evidence="2">
    <location>
        <begin position="62"/>
        <end position="82"/>
    </location>
</feature>
<feature type="topological domain" description="Cytoplasmic" evidence="2">
    <location>
        <begin position="83"/>
        <end position="102"/>
    </location>
</feature>
<feature type="transmembrane region" description="Helical" evidence="2">
    <location>
        <begin position="103"/>
        <end position="123"/>
    </location>
</feature>
<feature type="topological domain" description="Extracellular" evidence="2">
    <location>
        <begin position="124"/>
        <end position="162"/>
    </location>
</feature>
<feature type="transmembrane region" description="Helical" evidence="2">
    <location>
        <begin position="163"/>
        <end position="183"/>
    </location>
</feature>
<feature type="topological domain" description="Cytoplasmic" evidence="2">
    <location>
        <begin position="184"/>
        <end position="191"/>
    </location>
</feature>
<feature type="transmembrane region" description="Helical" evidence="2">
    <location>
        <begin position="192"/>
        <end position="212"/>
    </location>
</feature>
<feature type="topological domain" description="Extracellular" evidence="2">
    <location>
        <begin position="213"/>
        <end position="239"/>
    </location>
</feature>
<feature type="transmembrane region" description="Helical" evidence="2">
    <location>
        <begin position="240"/>
        <end position="260"/>
    </location>
</feature>
<feature type="topological domain" description="Cytoplasmic" evidence="2">
    <location>
        <begin position="261"/>
        <end position="280"/>
    </location>
</feature>
<feature type="transmembrane region" description="Helical" evidence="2">
    <location>
        <begin position="281"/>
        <end position="300"/>
    </location>
</feature>
<feature type="topological domain" description="Extracellular" evidence="2">
    <location>
        <begin position="301"/>
        <end position="330"/>
    </location>
</feature>
<feature type="transmembrane region" description="Helical" evidence="2">
    <location>
        <begin position="331"/>
        <end position="351"/>
    </location>
</feature>
<feature type="topological domain" description="Cytoplasmic" evidence="2">
    <location>
        <begin position="352"/>
        <end position="377"/>
    </location>
</feature>
<feature type="transmembrane region" description="Helical" evidence="2">
    <location>
        <begin position="378"/>
        <end position="398"/>
    </location>
</feature>
<feature type="topological domain" description="Extracellular" evidence="2">
    <location>
        <begin position="399"/>
        <end position="401"/>
    </location>
</feature>
<feature type="transmembrane region" description="Helical" evidence="2">
    <location>
        <begin position="402"/>
        <end position="422"/>
    </location>
</feature>
<feature type="topological domain" description="Cytoplasmic" evidence="2">
    <location>
        <begin position="423"/>
        <end position="485"/>
    </location>
</feature>
<feature type="transmembrane region" description="Helical" evidence="2">
    <location>
        <begin position="486"/>
        <end position="506"/>
    </location>
</feature>
<feature type="topological domain" description="Extracellular" evidence="2">
    <location>
        <begin position="507"/>
        <end position="519"/>
    </location>
</feature>
<feature type="transmembrane region" description="Helical" evidence="2">
    <location>
        <begin position="520"/>
        <end position="544"/>
    </location>
</feature>
<feature type="topological domain" description="Cytoplasmic" evidence="2">
    <location>
        <begin position="545"/>
        <end position="552"/>
    </location>
</feature>
<feature type="transmembrane region" description="Helical" evidence="2">
    <location>
        <begin position="553"/>
        <end position="573"/>
    </location>
</feature>
<feature type="topological domain" description="Extracellular" evidence="2">
    <location>
        <begin position="574"/>
        <end position="577"/>
    </location>
</feature>
<feature type="transmembrane region" description="Helical" evidence="2">
    <location>
        <begin position="578"/>
        <end position="598"/>
    </location>
</feature>
<feature type="topological domain" description="Cytoplasmic" evidence="2">
    <location>
        <begin position="599"/>
        <end position="622"/>
    </location>
</feature>
<feature type="modified residue" description="Phosphoserine" evidence="15">
    <location>
        <position position="616"/>
    </location>
</feature>
<feature type="glycosylation site" description="N-linked (GlcNAc...) asparagine" evidence="2">
    <location>
        <position position="223"/>
    </location>
</feature>
<feature type="glycosylation site" description="N-linked (GlcNAc...) asparagine" evidence="2">
    <location>
        <position position="229"/>
    </location>
</feature>
<keyword id="KW-0029">Amino-acid transport</keyword>
<keyword id="KW-1003">Cell membrane</keyword>
<keyword id="KW-0325">Glycoprotein</keyword>
<keyword id="KW-0472">Membrane</keyword>
<keyword id="KW-0597">Phosphoprotein</keyword>
<keyword id="KW-0675">Receptor</keyword>
<keyword id="KW-1185">Reference proteome</keyword>
<keyword id="KW-0812">Transmembrane</keyword>
<keyword id="KW-1133">Transmembrane helix</keyword>
<keyword id="KW-0813">Transport</keyword>
<proteinExistence type="evidence at protein level"/>
<sequence length="622" mass="67092">MGCKNLLGLGQQMLRRKVVDCSREESRLSRCLNTYDLVALGVGSTLGAGVYVLAGAVARENAGPAIVISFLIAALASVLAGLCYGEFGARVPKTGSAYLYSYVTVGELWAFITGWNLILSYIIGTSSVARAWSATFDELIGKPIGEFSRQHMALNAPGVLAQTPDIFAVIIIIILTGLLTLGVKESAMVNKIFTCINVLVLCFIVVSGFVKGSIKNWQLTEKNFSCNNNDTNVKYGEGGFMPFGFSGVLSGAATCFYAFVGFDCIATTGEEVKNPQKAIPVGIVASLLICFIAYFGVSAALTLMMPYFCLDIDSPLPGAFKHQGWEEAKYAVAIGSLCALSTSLLGSMFPMPRVIYAMAEDGLLFKFLAKINNRTKTPVIATVTSGAIAAVMAFLFELKDLVDLMSIGTLLAYSLVAACVLVLRYQPEQPNLVYQMARTTEELDRVDQNELVSASESQTGFLPVAEKFSLKSILSPKNVEPSKFSGLIVNISAGLLAALIITVCIVAVLGREALAEGTLWAVFVMTGSVLLCMLVTGIIWRQPESKTKLSFKVPFVPVLPVLSIFVNIYLMMQLDQGTWVRFAVWMLIGFTIYFGYGIWHSEEASLAAGQAKTPDSNLDQCK</sequence>
<comment type="function">
    <text evidence="3 4 9">High-affinity, low capacity permease involved in the transport of the cationic amino acids (arginine, lysine and ornithine) in non-hepatic tissues.</text>
</comment>
<comment type="function">
    <text evidence="4 6">(Microbial infection) Acts as a receptor for the ecotropic murine retroviral leukemia virus.</text>
</comment>
<comment type="catalytic activity">
    <reaction evidence="3 4 9">
        <text>L-arginine(in) = L-arginine(out)</text>
        <dbReference type="Rhea" id="RHEA:32143"/>
        <dbReference type="ChEBI" id="CHEBI:32682"/>
    </reaction>
</comment>
<comment type="catalytic activity">
    <reaction evidence="3 4">
        <text>L-lysine(in) = L-lysine(out)</text>
        <dbReference type="Rhea" id="RHEA:70935"/>
        <dbReference type="ChEBI" id="CHEBI:32551"/>
    </reaction>
</comment>
<comment type="catalytic activity">
    <reaction evidence="3 4">
        <text>L-ornithine(in) = L-ornithine(out)</text>
        <dbReference type="Rhea" id="RHEA:71199"/>
        <dbReference type="ChEBI" id="CHEBI:46911"/>
    </reaction>
</comment>
<comment type="catalytic activity">
    <reaction evidence="3">
        <text>L-homoarginine(in) = L-homoarginine(out)</text>
        <dbReference type="Rhea" id="RHEA:71203"/>
        <dbReference type="ChEBI" id="CHEBI:143006"/>
    </reaction>
</comment>
<comment type="biophysicochemical properties">
    <kinetics>
        <KM evidence="9">0.14 mM for L-arginine</KM>
        <KM evidence="4">0.077 mM for L-arginine</KM>
        <KM evidence="4">0.105 mM for L-ornithine</KM>
        <KM evidence="4">0.073 mM for L-lysine</KM>
    </kinetics>
</comment>
<comment type="subunit">
    <text evidence="1 5">Interacts with TM4SF5; the interaction is negatively regulated by arginine (By similarity). Forms tissue-specific complexes with ASL, ASS1 and nitric oxide synthase NOS1 or NOS3; the complex regulates cell-autonomous L-arginine synthesis and citrulline recycling while channeling extracellular L-arginine to nitric oxide synthesis pathway (PubMed:22081021).</text>
</comment>
<comment type="subcellular location">
    <subcellularLocation>
        <location evidence="7 8">Cell membrane</location>
        <topology evidence="2">Multi-pass membrane protein</topology>
    </subcellularLocation>
    <text evidence="8">In the absence of SCO1 in cardiomyocytes a mislocalization to the cytoplasm is seen.</text>
</comment>
<comment type="tissue specificity">
    <text evidence="3">Highest levels found in the testis and bone marrow. Not found in the liver.</text>
</comment>
<comment type="similarity">
    <text evidence="13">Belongs to the amino acid-polyamine-organocation (APC) superfamily. Cationic amino acid transporter (CAT) (TC 2.A.3.3) family.</text>
</comment>
<gene>
    <name evidence="14" type="primary">Slc7a1</name>
    <name type="synonym">Atrc1</name>
    <name type="synonym">Rec-1</name>
</gene>
<organism>
    <name type="scientific">Mus musculus</name>
    <name type="common">Mouse</name>
    <dbReference type="NCBI Taxonomy" id="10090"/>
    <lineage>
        <taxon>Eukaryota</taxon>
        <taxon>Metazoa</taxon>
        <taxon>Chordata</taxon>
        <taxon>Craniata</taxon>
        <taxon>Vertebrata</taxon>
        <taxon>Euteleostomi</taxon>
        <taxon>Mammalia</taxon>
        <taxon>Eutheria</taxon>
        <taxon>Euarchontoglires</taxon>
        <taxon>Glires</taxon>
        <taxon>Rodentia</taxon>
        <taxon>Myomorpha</taxon>
        <taxon>Muroidea</taxon>
        <taxon>Muridae</taxon>
        <taxon>Murinae</taxon>
        <taxon>Mus</taxon>
        <taxon>Mus</taxon>
    </lineage>
</organism>
<reference key="1">
    <citation type="journal article" date="1989" name="Cell">
        <title>A putative murine ecotropic retrovirus receptor gene encodes a multiple membrane-spanning protein and confers susceptibility to virus infection.</title>
        <authorList>
            <person name="Albritton L.M."/>
            <person name="Tseng L."/>
            <person name="Scadden D."/>
            <person name="Cunningham J.M."/>
        </authorList>
    </citation>
    <scope>NUCLEOTIDE SEQUENCE [MRNA]</scope>
    <scope>FUNCTION (MICROBIAL INFECTION)</scope>
    <source>
        <tissue>Fibroblast</tissue>
    </source>
</reference>
<reference key="2">
    <citation type="journal article" date="1991" name="Nature">
        <title>Transport of cationic amino acids by the mouse ecotropic retrovirus receptor.</title>
        <authorList>
            <person name="Kim J.W."/>
            <person name="Closs E.I."/>
            <person name="Albritton L.M."/>
            <person name="Cunningham J.M."/>
        </authorList>
    </citation>
    <scope>FUNCTION</scope>
    <scope>TRANSPORTER ACTIVITY</scope>
    <scope>TISSUE SPECIFICITY</scope>
</reference>
<reference key="3">
    <citation type="journal article" date="1991" name="Nature">
        <title>Cell-surface receptor for ecotropic murine retroviruses is a basic amino-acid transporter.</title>
        <authorList>
            <person name="Wang H."/>
            <person name="Kavanaugh M.P."/>
            <person name="North R.A."/>
            <person name="Kabat D."/>
        </authorList>
    </citation>
    <scope>FUNCTION (MICROBIAL INFECTION)</scope>
    <scope>FUNCTION</scope>
    <scope>TRANSPORTER ACTIVITY</scope>
    <scope>BIOPHYSICOCHEMICAL PROPERTIES</scope>
</reference>
<reference key="4">
    <citation type="journal article" date="1997" name="Biochemistry">
        <title>Human cationic amino acid transporters hCAT-1, hCAT-2A, and hCAT-2B: three related carriers with distinct transport properties.</title>
        <authorList>
            <person name="Closs E.I."/>
            <person name="Graef P."/>
            <person name="Habermeier A."/>
            <person name="Cunningham J.M."/>
            <person name="Foerstermann U."/>
        </authorList>
    </citation>
    <scope>FUNCTION</scope>
    <scope>TRANSPORTER ACTIVITY</scope>
    <scope>BIOPHYSICOCHEMICAL PROPERTIES</scope>
    <source>
        <tissue>Liver</tissue>
    </source>
</reference>
<reference key="5">
    <citation type="journal article" date="2009" name="Immunity">
        <title>The phagosomal proteome in interferon-gamma-activated macrophages.</title>
        <authorList>
            <person name="Trost M."/>
            <person name="English L."/>
            <person name="Lemieux S."/>
            <person name="Courcelles M."/>
            <person name="Desjardins M."/>
            <person name="Thibault P."/>
        </authorList>
    </citation>
    <scope>IDENTIFICATION BY MASS SPECTROMETRY [LARGE SCALE ANALYSIS]</scope>
</reference>
<reference key="6">
    <citation type="journal article" date="2010" name="Cell">
        <title>A tissue-specific atlas of mouse protein phosphorylation and expression.</title>
        <authorList>
            <person name="Huttlin E.L."/>
            <person name="Jedrychowski M.P."/>
            <person name="Elias J.E."/>
            <person name="Goswami T."/>
            <person name="Rad R."/>
            <person name="Beausoleil S.A."/>
            <person name="Villen J."/>
            <person name="Haas W."/>
            <person name="Sowa M.E."/>
            <person name="Gygi S.P."/>
        </authorList>
    </citation>
    <scope>PHOSPHORYLATION [LARGE SCALE ANALYSIS] AT SER-616</scope>
    <scope>IDENTIFICATION BY MASS SPECTROMETRY [LARGE SCALE ANALYSIS]</scope>
    <source>
        <tissue>Pancreas</tissue>
        <tissue>Spleen</tissue>
        <tissue>Testis</tissue>
    </source>
</reference>
<reference key="7">
    <citation type="journal article" date="2011" name="Nat. Med.">
        <title>Requirement of argininosuccinate lyase for systemic nitric oxide production.</title>
        <authorList>
            <person name="Erez A."/>
            <person name="Nagamani S.C."/>
            <person name="Shchelochkov O.A."/>
            <person name="Premkumar M.H."/>
            <person name="Campeau P.M."/>
            <person name="Chen Y."/>
            <person name="Garg H.K."/>
            <person name="Li L."/>
            <person name="Mian A."/>
            <person name="Bertin T.K."/>
            <person name="Black J.O."/>
            <person name="Zeng H."/>
            <person name="Tang Y."/>
            <person name="Reddy A.K."/>
            <person name="Summar M."/>
            <person name="O'Brien W.E."/>
            <person name="Harrison D.G."/>
            <person name="Mitch W.E."/>
            <person name="Marini J.C."/>
            <person name="Aschner J.L."/>
            <person name="Bryan N.S."/>
            <person name="Lee B."/>
        </authorList>
    </citation>
    <scope>INTERACTION WITH ASL; ASS1; NOS1 AND NOS3</scope>
</reference>
<reference key="8">
    <citation type="journal article" date="2015" name="Cell Rep.">
        <title>The mitochondrial metallochaperone SCO1 is required to sustain expression of the high-affinity copper transporter CTR1 and preserve copper homeostasis.</title>
        <authorList>
            <person name="Hlynialuk C.J."/>
            <person name="Ling B."/>
            <person name="Baker Z.N."/>
            <person name="Cobine P.A."/>
            <person name="Yu L.D."/>
            <person name="Boulet A."/>
            <person name="Wai T."/>
            <person name="Hossain A."/>
            <person name="El Zawily A.M."/>
            <person name="McFie P.J."/>
            <person name="Stone S.J."/>
            <person name="Diaz F."/>
            <person name="Moraes C.T."/>
            <person name="Viswanathan D."/>
            <person name="Petris M.J."/>
            <person name="Leary S.C."/>
        </authorList>
    </citation>
    <scope>SUBCELLULAR LOCATION</scope>
</reference>
<reference key="9">
    <citation type="journal article" date="2017" name="Hum. Mol. Genet.">
        <title>The mitochondrial metallochaperone SCO1 maintains CTR1 at the plasma membrane to preserve copper homeostasis in the murine heart.</title>
        <authorList>
            <person name="Baker Z.N."/>
            <person name="Jett K."/>
            <person name="Boulet A."/>
            <person name="Hossain A."/>
            <person name="Cobine P.A."/>
            <person name="Kim B.E."/>
            <person name="El Zawily A.M."/>
            <person name="Lee L."/>
            <person name="Tibbits G.F."/>
            <person name="Petris M.J."/>
            <person name="Leary S.C."/>
        </authorList>
    </citation>
    <scope>SUBCELLULAR LOCATION</scope>
</reference>
<dbReference type="EMBL" id="M26687">
    <property type="protein sequence ID" value="AAA37574.1"/>
    <property type="molecule type" value="mRNA"/>
</dbReference>
<dbReference type="CCDS" id="CCDS19882.1"/>
<dbReference type="PIR" id="A32742">
    <property type="entry name" value="A32742"/>
</dbReference>
<dbReference type="RefSeq" id="NP_001288353.1">
    <property type="nucleotide sequence ID" value="NM_001301424.2"/>
</dbReference>
<dbReference type="RefSeq" id="NP_001416066.1">
    <property type="nucleotide sequence ID" value="NM_001429137.1"/>
</dbReference>
<dbReference type="RefSeq" id="NP_001416067.1">
    <property type="nucleotide sequence ID" value="NM_001429138.1"/>
</dbReference>
<dbReference type="RefSeq" id="NP_031539.3">
    <property type="nucleotide sequence ID" value="NM_007513.5"/>
</dbReference>
<dbReference type="RefSeq" id="XP_006504859.1">
    <property type="nucleotide sequence ID" value="XM_006504796.1"/>
</dbReference>
<dbReference type="SMR" id="Q09143"/>
<dbReference type="BioGRID" id="198275">
    <property type="interactions" value="1"/>
</dbReference>
<dbReference type="FunCoup" id="Q09143">
    <property type="interactions" value="107"/>
</dbReference>
<dbReference type="IntAct" id="Q09143">
    <property type="interactions" value="1"/>
</dbReference>
<dbReference type="STRING" id="10090.ENSMUSP00000046714"/>
<dbReference type="TCDB" id="2.A.3.3.1">
    <property type="family name" value="the amino acid-polyamine-organocation (apc) family"/>
</dbReference>
<dbReference type="GlyCosmos" id="Q09143">
    <property type="glycosylation" value="2 sites, No reported glycans"/>
</dbReference>
<dbReference type="GlyGen" id="Q09143">
    <property type="glycosylation" value="3 sites"/>
</dbReference>
<dbReference type="iPTMnet" id="Q09143"/>
<dbReference type="PhosphoSitePlus" id="Q09143"/>
<dbReference type="SwissPalm" id="Q09143"/>
<dbReference type="jPOST" id="Q09143"/>
<dbReference type="PaxDb" id="10090-ENSMUSP00000046714"/>
<dbReference type="PeptideAtlas" id="Q09143"/>
<dbReference type="ProteomicsDB" id="285415"/>
<dbReference type="Pumba" id="Q09143"/>
<dbReference type="Antibodypedia" id="22734">
    <property type="antibodies" value="189 antibodies from 27 providers"/>
</dbReference>
<dbReference type="DNASU" id="11987"/>
<dbReference type="Ensembl" id="ENSMUST00000048116.15">
    <property type="protein sequence ID" value="ENSMUSP00000046714.9"/>
    <property type="gene ID" value="ENSMUSG00000041313.15"/>
</dbReference>
<dbReference type="GeneID" id="11987"/>
<dbReference type="KEGG" id="mmu:11987"/>
<dbReference type="UCSC" id="uc009aos.2">
    <property type="organism name" value="mouse"/>
</dbReference>
<dbReference type="AGR" id="MGI:88117"/>
<dbReference type="CTD" id="6541"/>
<dbReference type="MGI" id="MGI:88117">
    <property type="gene designation" value="Slc7a1"/>
</dbReference>
<dbReference type="VEuPathDB" id="HostDB:ENSMUSG00000041313"/>
<dbReference type="eggNOG" id="KOG1286">
    <property type="taxonomic scope" value="Eukaryota"/>
</dbReference>
<dbReference type="GeneTree" id="ENSGT00940000155349"/>
<dbReference type="InParanoid" id="Q09143"/>
<dbReference type="OMA" id="TLGWPHL"/>
<dbReference type="OrthoDB" id="3900342at2759"/>
<dbReference type="PhylomeDB" id="Q09143"/>
<dbReference type="TreeFam" id="TF315212"/>
<dbReference type="Reactome" id="R-MMU-352230">
    <property type="pathway name" value="Amino acid transport across the plasma membrane"/>
</dbReference>
<dbReference type="BioGRID-ORCS" id="11987">
    <property type="hits" value="13 hits in 76 CRISPR screens"/>
</dbReference>
<dbReference type="ChiTaRS" id="Slc7a1">
    <property type="organism name" value="mouse"/>
</dbReference>
<dbReference type="PRO" id="PR:Q09143"/>
<dbReference type="Proteomes" id="UP000000589">
    <property type="component" value="Chromosome 5"/>
</dbReference>
<dbReference type="RNAct" id="Q09143">
    <property type="molecule type" value="protein"/>
</dbReference>
<dbReference type="Bgee" id="ENSMUSG00000041313">
    <property type="expression patterns" value="Expressed in brain blood vessel and 243 other cell types or tissues"/>
</dbReference>
<dbReference type="ExpressionAtlas" id="Q09143">
    <property type="expression patterns" value="baseline and differential"/>
</dbReference>
<dbReference type="GO" id="GO:0016324">
    <property type="term" value="C:apical plasma membrane"/>
    <property type="evidence" value="ECO:0007669"/>
    <property type="project" value="Ensembl"/>
</dbReference>
<dbReference type="GO" id="GO:0016323">
    <property type="term" value="C:basolateral plasma membrane"/>
    <property type="evidence" value="ECO:0007669"/>
    <property type="project" value="Ensembl"/>
</dbReference>
<dbReference type="GO" id="GO:0016020">
    <property type="term" value="C:membrane"/>
    <property type="evidence" value="ECO:0000305"/>
    <property type="project" value="MGI"/>
</dbReference>
<dbReference type="GO" id="GO:0032991">
    <property type="term" value="C:protein-containing complex"/>
    <property type="evidence" value="ECO:0000266"/>
    <property type="project" value="MGI"/>
</dbReference>
<dbReference type="GO" id="GO:0061459">
    <property type="term" value="F:L-arginine transmembrane transporter activity"/>
    <property type="evidence" value="ECO:0000314"/>
    <property type="project" value="UniProtKB"/>
</dbReference>
<dbReference type="GO" id="GO:0005290">
    <property type="term" value="F:L-histidine transmembrane transporter activity"/>
    <property type="evidence" value="ECO:0007669"/>
    <property type="project" value="Ensembl"/>
</dbReference>
<dbReference type="GO" id="GO:0015189">
    <property type="term" value="F:L-lysine transmembrane transporter activity"/>
    <property type="evidence" value="ECO:0000314"/>
    <property type="project" value="UniProtKB"/>
</dbReference>
<dbReference type="GO" id="GO:0000064">
    <property type="term" value="F:L-ornithine transmembrane transporter activity"/>
    <property type="evidence" value="ECO:0000314"/>
    <property type="project" value="UniProtKB"/>
</dbReference>
<dbReference type="GO" id="GO:0001618">
    <property type="term" value="F:virus receptor activity"/>
    <property type="evidence" value="ECO:0000314"/>
    <property type="project" value="UniProtKB"/>
</dbReference>
<dbReference type="GO" id="GO:1903826">
    <property type="term" value="P:L-arginine transmembrane transport"/>
    <property type="evidence" value="ECO:0000314"/>
    <property type="project" value="UniProtKB"/>
</dbReference>
<dbReference type="GO" id="GO:1903810">
    <property type="term" value="P:L-histidine import across plasma membrane"/>
    <property type="evidence" value="ECO:0007669"/>
    <property type="project" value="Ensembl"/>
</dbReference>
<dbReference type="GO" id="GO:1903352">
    <property type="term" value="P:L-ornithine transmembrane transport"/>
    <property type="evidence" value="ECO:0000314"/>
    <property type="project" value="UniProtKB"/>
</dbReference>
<dbReference type="GO" id="GO:0015819">
    <property type="term" value="P:lysine transport"/>
    <property type="evidence" value="ECO:0007669"/>
    <property type="project" value="Ensembl"/>
</dbReference>
<dbReference type="GO" id="GO:0042102">
    <property type="term" value="P:positive regulation of T cell proliferation"/>
    <property type="evidence" value="ECO:0007669"/>
    <property type="project" value="Ensembl"/>
</dbReference>
<dbReference type="FunFam" id="1.20.1740.10:FF:000024">
    <property type="entry name" value="High affinity cationic amino acid transporter 1"/>
    <property type="match status" value="1"/>
</dbReference>
<dbReference type="FunFam" id="1.20.1740.10:FF:000009">
    <property type="entry name" value="Low affinity cationic amino acid transporter 2"/>
    <property type="match status" value="1"/>
</dbReference>
<dbReference type="Gene3D" id="1.20.1740.10">
    <property type="entry name" value="Amino acid/polyamine transporter I"/>
    <property type="match status" value="2"/>
</dbReference>
<dbReference type="InterPro" id="IPR002293">
    <property type="entry name" value="AA/rel_permease1"/>
</dbReference>
<dbReference type="InterPro" id="IPR004755">
    <property type="entry name" value="Cat_AA_permease"/>
</dbReference>
<dbReference type="InterPro" id="IPR029485">
    <property type="entry name" value="CAT_C"/>
</dbReference>
<dbReference type="NCBIfam" id="TIGR00906">
    <property type="entry name" value="2A0303"/>
    <property type="match status" value="1"/>
</dbReference>
<dbReference type="PANTHER" id="PTHR43243:SF28">
    <property type="entry name" value="HIGH AFFINITY CATIONIC AMINO ACID TRANSPORTER 1"/>
    <property type="match status" value="1"/>
</dbReference>
<dbReference type="PANTHER" id="PTHR43243">
    <property type="entry name" value="INNER MEMBRANE TRANSPORTER YGJI-RELATED"/>
    <property type="match status" value="1"/>
</dbReference>
<dbReference type="Pfam" id="PF13520">
    <property type="entry name" value="AA_permease_2"/>
    <property type="match status" value="1"/>
</dbReference>
<dbReference type="Pfam" id="PF13906">
    <property type="entry name" value="AA_permease_C"/>
    <property type="match status" value="1"/>
</dbReference>
<dbReference type="PIRSF" id="PIRSF006060">
    <property type="entry name" value="AA_transporter"/>
    <property type="match status" value="1"/>
</dbReference>
<name>CTR1_MOUSE</name>
<evidence type="ECO:0000250" key="1">
    <source>
        <dbReference type="UniProtKB" id="P30825"/>
    </source>
</evidence>
<evidence type="ECO:0000255" key="2"/>
<evidence type="ECO:0000269" key="3">
    <source>
    </source>
</evidence>
<evidence type="ECO:0000269" key="4">
    <source>
    </source>
</evidence>
<evidence type="ECO:0000269" key="5">
    <source>
    </source>
</evidence>
<evidence type="ECO:0000269" key="6">
    <source>
    </source>
</evidence>
<evidence type="ECO:0000269" key="7">
    <source>
    </source>
</evidence>
<evidence type="ECO:0000269" key="8">
    <source>
    </source>
</evidence>
<evidence type="ECO:0000269" key="9">
    <source>
    </source>
</evidence>
<evidence type="ECO:0000303" key="10">
    <source>
    </source>
</evidence>
<evidence type="ECO:0000303" key="11">
    <source>
    </source>
</evidence>
<evidence type="ECO:0000303" key="12">
    <source>
    </source>
</evidence>
<evidence type="ECO:0000305" key="13"/>
<evidence type="ECO:0000312" key="14">
    <source>
        <dbReference type="MGI" id="MGI:88117"/>
    </source>
</evidence>
<evidence type="ECO:0007744" key="15">
    <source>
    </source>
</evidence>
<protein>
    <recommendedName>
        <fullName>High affinity cationic amino acid transporter 1</fullName>
        <shortName evidence="1">CAT-1</shortName>
        <shortName>CAT1</shortName>
    </recommendedName>
    <alternativeName>
        <fullName>Ecotropic retroviral leukemia receptor</fullName>
    </alternativeName>
    <alternativeName>
        <fullName evidence="10 12">Ecotropic retrovirus receptor</fullName>
        <shortName>ERR</shortName>
        <shortName evidence="11">EcoR</shortName>
    </alternativeName>
    <alternativeName>
        <fullName evidence="14">Solute carrier family 7 member 1</fullName>
    </alternativeName>
    <alternativeName>
        <fullName>System Y+ basic amino acid transporter</fullName>
    </alternativeName>
</protein>
<accession>Q09143</accession>
<accession>P30824</accession>